<comment type="function">
    <text evidence="2">Catalyzes the oxidative deamination of primary and some secondary amine such as neurotransmitters, with concomitant reduction of oxygen to hydrogen peroxide and has important functions in the metabolism of neuroactive and vasoactive amines in the central nervous system and peripheral tissues. Preferentially oxidizes serotonin. Also catalyzes the oxidative deamination of kynuramine to 3-(2-aminophenyl)-3-oxopropanal that can spontaneously condense to 4-hydroxyquinoline.</text>
</comment>
<comment type="catalytic activity">
    <reaction evidence="2">
        <text>a secondary aliphatic amine + O2 + H2O = a primary amine + an aldehyde + H2O2</text>
        <dbReference type="Rhea" id="RHEA:26414"/>
        <dbReference type="ChEBI" id="CHEBI:15377"/>
        <dbReference type="ChEBI" id="CHEBI:15379"/>
        <dbReference type="ChEBI" id="CHEBI:16240"/>
        <dbReference type="ChEBI" id="CHEBI:17478"/>
        <dbReference type="ChEBI" id="CHEBI:58855"/>
        <dbReference type="ChEBI" id="CHEBI:65296"/>
        <dbReference type="EC" id="1.4.3.4"/>
    </reaction>
</comment>
<comment type="catalytic activity">
    <reaction evidence="2">
        <text>a primary methyl amine + O2 + H2O = an aldehyde + H2O2 + NH4(+)</text>
        <dbReference type="Rhea" id="RHEA:16153"/>
        <dbReference type="ChEBI" id="CHEBI:15377"/>
        <dbReference type="ChEBI" id="CHEBI:15379"/>
        <dbReference type="ChEBI" id="CHEBI:16240"/>
        <dbReference type="ChEBI" id="CHEBI:17478"/>
        <dbReference type="ChEBI" id="CHEBI:28938"/>
        <dbReference type="ChEBI" id="CHEBI:228804"/>
        <dbReference type="EC" id="1.4.3.21"/>
    </reaction>
</comment>
<comment type="catalytic activity">
    <reaction evidence="2">
        <text>(R)-adrenaline + O2 + H2O = (R)-3,4-dihydroxymandelaldehyde + methylamine + H2O2</text>
        <dbReference type="Rhea" id="RHEA:51168"/>
        <dbReference type="ChEBI" id="CHEBI:15377"/>
        <dbReference type="ChEBI" id="CHEBI:15379"/>
        <dbReference type="ChEBI" id="CHEBI:16240"/>
        <dbReference type="ChEBI" id="CHEBI:59338"/>
        <dbReference type="ChEBI" id="CHEBI:71406"/>
        <dbReference type="ChEBI" id="CHEBI:180943"/>
    </reaction>
</comment>
<comment type="catalytic activity">
    <reaction evidence="2">
        <text>dopamine + O2 + H2O = 3,4-dihydroxyphenylacetaldehyde + H2O2 + NH4(+)</text>
        <dbReference type="Rhea" id="RHEA:27946"/>
        <dbReference type="ChEBI" id="CHEBI:15377"/>
        <dbReference type="ChEBI" id="CHEBI:15379"/>
        <dbReference type="ChEBI" id="CHEBI:16240"/>
        <dbReference type="ChEBI" id="CHEBI:27978"/>
        <dbReference type="ChEBI" id="CHEBI:28938"/>
        <dbReference type="ChEBI" id="CHEBI:59905"/>
    </reaction>
</comment>
<comment type="catalytic activity">
    <reaction evidence="2">
        <text>tyramine + O2 + H2O = (4-hydroxyphenyl)acetaldehyde + H2O2 + NH4(+)</text>
        <dbReference type="Rhea" id="RHEA:30591"/>
        <dbReference type="ChEBI" id="CHEBI:15377"/>
        <dbReference type="ChEBI" id="CHEBI:15379"/>
        <dbReference type="ChEBI" id="CHEBI:15621"/>
        <dbReference type="ChEBI" id="CHEBI:16240"/>
        <dbReference type="ChEBI" id="CHEBI:28938"/>
        <dbReference type="ChEBI" id="CHEBI:327995"/>
    </reaction>
</comment>
<comment type="catalytic activity">
    <reaction evidence="2">
        <text>(R)-noradrenaline + O2 + H2O = (R)-3,4-dihydroxymandelaldehyde + H2O2 + NH4(+)</text>
        <dbReference type="Rhea" id="RHEA:69076"/>
        <dbReference type="ChEBI" id="CHEBI:15377"/>
        <dbReference type="ChEBI" id="CHEBI:15379"/>
        <dbReference type="ChEBI" id="CHEBI:16240"/>
        <dbReference type="ChEBI" id="CHEBI:28938"/>
        <dbReference type="ChEBI" id="CHEBI:72587"/>
        <dbReference type="ChEBI" id="CHEBI:180943"/>
    </reaction>
</comment>
<comment type="catalytic activity">
    <reaction evidence="2">
        <text>serotonin + O2 + H2O = (5-hydroxyindol-3-yl)acetaldehyde + H2O2 + NH4(+)</text>
        <dbReference type="Rhea" id="RHEA:69072"/>
        <dbReference type="ChEBI" id="CHEBI:15377"/>
        <dbReference type="ChEBI" id="CHEBI:15379"/>
        <dbReference type="ChEBI" id="CHEBI:16240"/>
        <dbReference type="ChEBI" id="CHEBI:28938"/>
        <dbReference type="ChEBI" id="CHEBI:50157"/>
        <dbReference type="ChEBI" id="CHEBI:350546"/>
    </reaction>
</comment>
<comment type="catalytic activity">
    <reaction evidence="2">
        <text>kynuramine + O2 + H2O = 3-(2-aminophenyl)-3-oxopropanal + H2O2 + NH4(+)</text>
        <dbReference type="Rhea" id="RHEA:59596"/>
        <dbReference type="ChEBI" id="CHEBI:15377"/>
        <dbReference type="ChEBI" id="CHEBI:15379"/>
        <dbReference type="ChEBI" id="CHEBI:16240"/>
        <dbReference type="ChEBI" id="CHEBI:28938"/>
        <dbReference type="ChEBI" id="CHEBI:180898"/>
        <dbReference type="ChEBI" id="CHEBI:180899"/>
    </reaction>
    <physiologicalReaction direction="left-to-right" evidence="2">
        <dbReference type="Rhea" id="RHEA:59597"/>
    </physiologicalReaction>
</comment>
<comment type="catalytic activity">
    <reaction evidence="2">
        <text>tryptamine + O2 + H2O = indole-3-acetaldehyde + H2O2 + NH4(+)</text>
        <dbReference type="Rhea" id="RHEA:59416"/>
        <dbReference type="ChEBI" id="CHEBI:15377"/>
        <dbReference type="ChEBI" id="CHEBI:15379"/>
        <dbReference type="ChEBI" id="CHEBI:16240"/>
        <dbReference type="ChEBI" id="CHEBI:18086"/>
        <dbReference type="ChEBI" id="CHEBI:28938"/>
        <dbReference type="ChEBI" id="CHEBI:57887"/>
    </reaction>
</comment>
<comment type="catalytic activity">
    <reaction evidence="2">
        <text>2-phenylethylamine + O2 + H2O = 2-phenylacetaldehyde + H2O2 + NH4(+)</text>
        <dbReference type="Rhea" id="RHEA:25265"/>
        <dbReference type="ChEBI" id="CHEBI:15377"/>
        <dbReference type="ChEBI" id="CHEBI:15379"/>
        <dbReference type="ChEBI" id="CHEBI:16240"/>
        <dbReference type="ChEBI" id="CHEBI:16424"/>
        <dbReference type="ChEBI" id="CHEBI:28938"/>
        <dbReference type="ChEBI" id="CHEBI:225237"/>
    </reaction>
</comment>
<comment type="cofactor">
    <cofactor evidence="3">
        <name>FAD</name>
        <dbReference type="ChEBI" id="CHEBI:57692"/>
    </cofactor>
</comment>
<comment type="subunit">
    <text evidence="3">Monomer, homo- or heterodimer (containing two subunits of similar size). Each subunit contains a covalently bound flavin. Enzymatically active as monomer (By similarity).</text>
</comment>
<comment type="subcellular location">
    <subcellularLocation>
        <location evidence="2">Mitochondrion outer membrane</location>
        <topology evidence="2">Single-pass type IV membrane protein</topology>
        <orientation evidence="2">Cytoplasmic side</orientation>
    </subcellularLocation>
</comment>
<comment type="similarity">
    <text evidence="4">Belongs to the flavin monoamine oxidase family.</text>
</comment>
<sequence length="527" mass="60088">MASREKTSIEGHMFDVVVIGGGISGLSAAKLLAEHEVDVLVLEARDRVGGRTYTVRNEHVDYVDVGGAYVGPTQNRILRLSKELGLETYKVNVNERLVQYVKGKTYPFRGAFPPVWNPIAYLDYNNLWRTMDNMGKEIPADAPWEAPHAEEWDKMTMKDLIDKICWTKTARRFASLFVNINVTSEPHEVSALWFLWYVKQCGGTTRIFSVTNGGQERKFVGGSGQVSERIMERLGDRVKLKRPVTYVDQSDDNIIIETLNHELYECKYVISAIPPTLTAKIHFRPELPSERNQLIQRLPMGAIIKCMMYYKEAFWKKKDYCGCMIIEDEEAPISITLDDTKPDGSLPAIMGFILARKADRLAKLHKEIRKRKICELYAKVLGSQEALQPVHYEEKNWCEEQYSGGCYTAYFPPGIMTHYGRVIRQPFGRIYFAGTETATHWSGYMEGAVEAGERTAREVLNALGRVAEKDLKTQEPESKDVPAMEITHTFWERNLPSVTGLLKLIGFTTSVTALWIVAYKFRLLRRS</sequence>
<protein>
    <recommendedName>
        <fullName evidence="3">Amine oxidase [flavin-containing] A</fullName>
        <ecNumber evidence="2">1.4.3.21</ecNumber>
        <ecNumber evidence="2">1.4.3.4</ecNumber>
    </recommendedName>
    <alternativeName>
        <fullName>Monoamine oxidase type A</fullName>
        <shortName>MAO-A</shortName>
    </alternativeName>
</protein>
<keyword id="KW-0007">Acetylation</keyword>
<keyword id="KW-0128">Catecholamine metabolism</keyword>
<keyword id="KW-0274">FAD</keyword>
<keyword id="KW-0285">Flavoprotein</keyword>
<keyword id="KW-0472">Membrane</keyword>
<keyword id="KW-0496">Mitochondrion</keyword>
<keyword id="KW-1000">Mitochondrion outer membrane</keyword>
<keyword id="KW-0531">Neurotransmitter degradation</keyword>
<keyword id="KW-0560">Oxidoreductase</keyword>
<keyword id="KW-0597">Phosphoprotein</keyword>
<keyword id="KW-1185">Reference proteome</keyword>
<keyword id="KW-0812">Transmembrane</keyword>
<keyword id="KW-1133">Transmembrane helix</keyword>
<reference key="1">
    <citation type="submission" date="2000-02" db="EMBL/GenBank/DDBJ databases">
        <authorList>
            <person name="Hashizume C."/>
            <person name="Mori Y."/>
        </authorList>
    </citation>
    <scope>NUCLEOTIDE SEQUENCE [MRNA]</scope>
    <source>
        <strain>Beagle</strain>
        <tissue>Brain</tissue>
    </source>
</reference>
<proteinExistence type="evidence at transcript level"/>
<gene>
    <name evidence="3" type="primary">MAOA</name>
</gene>
<evidence type="ECO:0000250" key="1"/>
<evidence type="ECO:0000250" key="2">
    <source>
        <dbReference type="UniProtKB" id="P21396"/>
    </source>
</evidence>
<evidence type="ECO:0000250" key="3">
    <source>
        <dbReference type="UniProtKB" id="P21397"/>
    </source>
</evidence>
<evidence type="ECO:0000305" key="4"/>
<accession>P58027</accession>
<dbReference type="EC" id="1.4.3.21" evidence="2"/>
<dbReference type="EC" id="1.4.3.4" evidence="2"/>
<dbReference type="EMBL" id="AB038563">
    <property type="protein sequence ID" value="BAB40325.1"/>
    <property type="molecule type" value="mRNA"/>
</dbReference>
<dbReference type="RefSeq" id="NP_001002969.1">
    <property type="nucleotide sequence ID" value="NM_001002969.1"/>
</dbReference>
<dbReference type="SMR" id="P58027"/>
<dbReference type="FunCoup" id="P58027">
    <property type="interactions" value="39"/>
</dbReference>
<dbReference type="STRING" id="9615.ENSCAFP00000021307"/>
<dbReference type="PaxDb" id="9612-ENSCAFP00000021307"/>
<dbReference type="GeneID" id="403450"/>
<dbReference type="KEGG" id="cfa:403450"/>
<dbReference type="CTD" id="4128"/>
<dbReference type="eggNOG" id="KOG0029">
    <property type="taxonomic scope" value="Eukaryota"/>
</dbReference>
<dbReference type="HOGENOM" id="CLU_004498_0_1_1"/>
<dbReference type="InParanoid" id="P58027"/>
<dbReference type="OMA" id="EWTRGAY"/>
<dbReference type="OrthoDB" id="7777654at2759"/>
<dbReference type="TreeFam" id="TF313314"/>
<dbReference type="Proteomes" id="UP000002254">
    <property type="component" value="Unplaced"/>
</dbReference>
<dbReference type="Proteomes" id="UP000694429">
    <property type="component" value="Unplaced"/>
</dbReference>
<dbReference type="Proteomes" id="UP000694542">
    <property type="component" value="Unplaced"/>
</dbReference>
<dbReference type="Proteomes" id="UP000805418">
    <property type="component" value="Unplaced"/>
</dbReference>
<dbReference type="GO" id="GO:0005741">
    <property type="term" value="C:mitochondrial outer membrane"/>
    <property type="evidence" value="ECO:0007669"/>
    <property type="project" value="UniProtKB-SubCell"/>
</dbReference>
<dbReference type="GO" id="GO:0005739">
    <property type="term" value="C:mitochondrion"/>
    <property type="evidence" value="ECO:0000318"/>
    <property type="project" value="GO_Central"/>
</dbReference>
<dbReference type="GO" id="GO:0050660">
    <property type="term" value="F:flavin adenine dinucleotide binding"/>
    <property type="evidence" value="ECO:0000318"/>
    <property type="project" value="GO_Central"/>
</dbReference>
<dbReference type="GO" id="GO:0097621">
    <property type="term" value="F:monoamine oxidase activity"/>
    <property type="evidence" value="ECO:0000250"/>
    <property type="project" value="UniProtKB"/>
</dbReference>
<dbReference type="GO" id="GO:0008131">
    <property type="term" value="F:primary methylamine oxidase activity"/>
    <property type="evidence" value="ECO:0000250"/>
    <property type="project" value="UniProtKB"/>
</dbReference>
<dbReference type="GO" id="GO:0006584">
    <property type="term" value="P:catecholamine metabolic process"/>
    <property type="evidence" value="ECO:0007669"/>
    <property type="project" value="UniProtKB-KW"/>
</dbReference>
<dbReference type="FunFam" id="1.10.405.10:FF:000005">
    <property type="entry name" value="Amine oxidase [flavin-containing]"/>
    <property type="match status" value="1"/>
</dbReference>
<dbReference type="Gene3D" id="3.90.660.10">
    <property type="match status" value="1"/>
</dbReference>
<dbReference type="Gene3D" id="6.10.250.130">
    <property type="match status" value="1"/>
</dbReference>
<dbReference type="Gene3D" id="3.50.50.60">
    <property type="entry name" value="FAD/NAD(P)-binding domain"/>
    <property type="match status" value="1"/>
</dbReference>
<dbReference type="Gene3D" id="1.10.405.10">
    <property type="entry name" value="Guanine Nucleotide Dissociation Inhibitor, domain 1"/>
    <property type="match status" value="1"/>
</dbReference>
<dbReference type="InterPro" id="IPR002937">
    <property type="entry name" value="Amino_oxidase"/>
</dbReference>
<dbReference type="InterPro" id="IPR036188">
    <property type="entry name" value="FAD/NAD-bd_sf"/>
</dbReference>
<dbReference type="InterPro" id="IPR001613">
    <property type="entry name" value="Flavin_amine_oxidase"/>
</dbReference>
<dbReference type="InterPro" id="IPR050703">
    <property type="entry name" value="Flavin_MAO"/>
</dbReference>
<dbReference type="PANTHER" id="PTHR43563">
    <property type="entry name" value="AMINE OXIDASE"/>
    <property type="match status" value="1"/>
</dbReference>
<dbReference type="PANTHER" id="PTHR43563:SF11">
    <property type="entry name" value="AMINE OXIDASE [FLAVIN-CONTAINING] A"/>
    <property type="match status" value="1"/>
</dbReference>
<dbReference type="Pfam" id="PF01593">
    <property type="entry name" value="Amino_oxidase"/>
    <property type="match status" value="1"/>
</dbReference>
<dbReference type="PRINTS" id="PR00757">
    <property type="entry name" value="AMINEOXDASEF"/>
</dbReference>
<dbReference type="SUPFAM" id="SSF54373">
    <property type="entry name" value="FAD-linked reductases, C-terminal domain"/>
    <property type="match status" value="1"/>
</dbReference>
<dbReference type="SUPFAM" id="SSF51905">
    <property type="entry name" value="FAD/NAD(P)-binding domain"/>
    <property type="match status" value="1"/>
</dbReference>
<name>AOFA_CANLF</name>
<feature type="chain" id="PRO_0000099848" description="Amine oxidase [flavin-containing] A">
    <location>
        <begin position="1"/>
        <end position="527"/>
    </location>
</feature>
<feature type="topological domain" description="Cytoplasmic" evidence="1">
    <location>
        <begin position="1"/>
        <end position="497"/>
    </location>
</feature>
<feature type="transmembrane region" description="Helical; Anchor for type IV membrane protein" evidence="1">
    <location>
        <begin position="498"/>
        <end position="518"/>
    </location>
</feature>
<feature type="topological domain" description="Mitochondrial intermembrane" evidence="1">
    <location>
        <begin position="519"/>
        <end position="527"/>
    </location>
</feature>
<feature type="region of interest" description="Interaction with membrane phospholipid headgroups" evidence="1">
    <location>
        <begin position="520"/>
        <end position="522"/>
    </location>
</feature>
<feature type="site" description="Important for substrate specificity" evidence="1">
    <location>
        <position position="335"/>
    </location>
</feature>
<feature type="site" description="Important for catalytic activity" evidence="1">
    <location>
        <position position="374"/>
    </location>
</feature>
<feature type="modified residue" description="N-acetylmethionine" evidence="3">
    <location>
        <position position="1"/>
    </location>
</feature>
<feature type="modified residue" description="Phosphoserine" evidence="2">
    <location>
        <position position="383"/>
    </location>
</feature>
<feature type="modified residue" description="S-8alpha-FAD cysteine" evidence="3">
    <location>
        <position position="406"/>
    </location>
</feature>
<organism>
    <name type="scientific">Canis lupus familiaris</name>
    <name type="common">Dog</name>
    <name type="synonym">Canis familiaris</name>
    <dbReference type="NCBI Taxonomy" id="9615"/>
    <lineage>
        <taxon>Eukaryota</taxon>
        <taxon>Metazoa</taxon>
        <taxon>Chordata</taxon>
        <taxon>Craniata</taxon>
        <taxon>Vertebrata</taxon>
        <taxon>Euteleostomi</taxon>
        <taxon>Mammalia</taxon>
        <taxon>Eutheria</taxon>
        <taxon>Laurasiatheria</taxon>
        <taxon>Carnivora</taxon>
        <taxon>Caniformia</taxon>
        <taxon>Canidae</taxon>
        <taxon>Canis</taxon>
    </lineage>
</organism>